<sequence>MIREERLLKVLRAPHVSEKASTAMEKSNTIVLKVAKDATKAEIKAAVQKLFEVEVEVVNTLVVKGKVKRHGQRIGRRSDWKKAYVTLKEGQNLDFVGGAE</sequence>
<dbReference type="EMBL" id="CP000243">
    <property type="protein sequence ID" value="ABE09208.1"/>
    <property type="molecule type" value="Genomic_DNA"/>
</dbReference>
<dbReference type="RefSeq" id="WP_000617544.1">
    <property type="nucleotide sequence ID" value="NZ_CP064825.1"/>
</dbReference>
<dbReference type="SMR" id="Q1R606"/>
<dbReference type="GeneID" id="93778669"/>
<dbReference type="KEGG" id="eci:UTI89_C3771"/>
<dbReference type="HOGENOM" id="CLU_037562_3_1_6"/>
<dbReference type="Proteomes" id="UP000001952">
    <property type="component" value="Chromosome"/>
</dbReference>
<dbReference type="GO" id="GO:1990904">
    <property type="term" value="C:ribonucleoprotein complex"/>
    <property type="evidence" value="ECO:0007669"/>
    <property type="project" value="UniProtKB-KW"/>
</dbReference>
<dbReference type="GO" id="GO:0005840">
    <property type="term" value="C:ribosome"/>
    <property type="evidence" value="ECO:0007669"/>
    <property type="project" value="UniProtKB-KW"/>
</dbReference>
<dbReference type="GO" id="GO:0019843">
    <property type="term" value="F:rRNA binding"/>
    <property type="evidence" value="ECO:0007669"/>
    <property type="project" value="UniProtKB-UniRule"/>
</dbReference>
<dbReference type="GO" id="GO:0003735">
    <property type="term" value="F:structural constituent of ribosome"/>
    <property type="evidence" value="ECO:0007669"/>
    <property type="project" value="InterPro"/>
</dbReference>
<dbReference type="GO" id="GO:0006412">
    <property type="term" value="P:translation"/>
    <property type="evidence" value="ECO:0007669"/>
    <property type="project" value="UniProtKB-UniRule"/>
</dbReference>
<dbReference type="FunFam" id="3.30.70.330:FF:000001">
    <property type="entry name" value="50S ribosomal protein L23"/>
    <property type="match status" value="1"/>
</dbReference>
<dbReference type="Gene3D" id="3.30.70.330">
    <property type="match status" value="1"/>
</dbReference>
<dbReference type="HAMAP" id="MF_01369_B">
    <property type="entry name" value="Ribosomal_uL23_B"/>
    <property type="match status" value="1"/>
</dbReference>
<dbReference type="InterPro" id="IPR012677">
    <property type="entry name" value="Nucleotide-bd_a/b_plait_sf"/>
</dbReference>
<dbReference type="InterPro" id="IPR013025">
    <property type="entry name" value="Ribosomal_uL23-like"/>
</dbReference>
<dbReference type="InterPro" id="IPR012678">
    <property type="entry name" value="Ribosomal_uL23/eL15/eS24_sf"/>
</dbReference>
<dbReference type="InterPro" id="IPR001014">
    <property type="entry name" value="Ribosomal_uL23_CS"/>
</dbReference>
<dbReference type="NCBIfam" id="NF004358">
    <property type="entry name" value="PRK05738.1-1"/>
    <property type="match status" value="1"/>
</dbReference>
<dbReference type="NCBIfam" id="NF004359">
    <property type="entry name" value="PRK05738.1-3"/>
    <property type="match status" value="1"/>
</dbReference>
<dbReference type="NCBIfam" id="NF004363">
    <property type="entry name" value="PRK05738.2-4"/>
    <property type="match status" value="1"/>
</dbReference>
<dbReference type="PANTHER" id="PTHR11620">
    <property type="entry name" value="60S RIBOSOMAL PROTEIN L23A"/>
    <property type="match status" value="1"/>
</dbReference>
<dbReference type="Pfam" id="PF00276">
    <property type="entry name" value="Ribosomal_L23"/>
    <property type="match status" value="1"/>
</dbReference>
<dbReference type="SUPFAM" id="SSF54189">
    <property type="entry name" value="Ribosomal proteins S24e, L23 and L15e"/>
    <property type="match status" value="1"/>
</dbReference>
<dbReference type="PROSITE" id="PS00050">
    <property type="entry name" value="RIBOSOMAL_L23"/>
    <property type="match status" value="1"/>
</dbReference>
<proteinExistence type="inferred from homology"/>
<accession>Q1R606</accession>
<evidence type="ECO:0000255" key="1">
    <source>
        <dbReference type="HAMAP-Rule" id="MF_01369"/>
    </source>
</evidence>
<evidence type="ECO:0000305" key="2"/>
<gene>
    <name evidence="1" type="primary">rplW</name>
    <name type="ordered locus">UTI89_C3771</name>
</gene>
<comment type="function">
    <text evidence="1">One of the early assembly proteins it binds 23S rRNA. One of the proteins that surrounds the polypeptide exit tunnel on the outside of the ribosome. Forms the main docking site for trigger factor binding to the ribosome.</text>
</comment>
<comment type="subunit">
    <text evidence="1">Part of the 50S ribosomal subunit. Contacts protein L29, and trigger factor when it is bound to the ribosome.</text>
</comment>
<comment type="similarity">
    <text evidence="1">Belongs to the universal ribosomal protein uL23 family.</text>
</comment>
<organism>
    <name type="scientific">Escherichia coli (strain UTI89 / UPEC)</name>
    <dbReference type="NCBI Taxonomy" id="364106"/>
    <lineage>
        <taxon>Bacteria</taxon>
        <taxon>Pseudomonadati</taxon>
        <taxon>Pseudomonadota</taxon>
        <taxon>Gammaproteobacteria</taxon>
        <taxon>Enterobacterales</taxon>
        <taxon>Enterobacteriaceae</taxon>
        <taxon>Escherichia</taxon>
    </lineage>
</organism>
<keyword id="KW-0687">Ribonucleoprotein</keyword>
<keyword id="KW-0689">Ribosomal protein</keyword>
<keyword id="KW-0694">RNA-binding</keyword>
<keyword id="KW-0699">rRNA-binding</keyword>
<feature type="chain" id="PRO_0000272744" description="Large ribosomal subunit protein uL23">
    <location>
        <begin position="1"/>
        <end position="100"/>
    </location>
</feature>
<reference key="1">
    <citation type="journal article" date="2006" name="Proc. Natl. Acad. Sci. U.S.A.">
        <title>Identification of genes subject to positive selection in uropathogenic strains of Escherichia coli: a comparative genomics approach.</title>
        <authorList>
            <person name="Chen S.L."/>
            <person name="Hung C.-S."/>
            <person name="Xu J."/>
            <person name="Reigstad C.S."/>
            <person name="Magrini V."/>
            <person name="Sabo A."/>
            <person name="Blasiar D."/>
            <person name="Bieri T."/>
            <person name="Meyer R.R."/>
            <person name="Ozersky P."/>
            <person name="Armstrong J.R."/>
            <person name="Fulton R.S."/>
            <person name="Latreille J.P."/>
            <person name="Spieth J."/>
            <person name="Hooton T.M."/>
            <person name="Mardis E.R."/>
            <person name="Hultgren S.J."/>
            <person name="Gordon J.I."/>
        </authorList>
    </citation>
    <scope>NUCLEOTIDE SEQUENCE [LARGE SCALE GENOMIC DNA]</scope>
    <source>
        <strain>UTI89 / UPEC</strain>
    </source>
</reference>
<name>RL23_ECOUT</name>
<protein>
    <recommendedName>
        <fullName evidence="1">Large ribosomal subunit protein uL23</fullName>
    </recommendedName>
    <alternativeName>
        <fullName evidence="2">50S ribosomal protein L23</fullName>
    </alternativeName>
</protein>